<reference key="1">
    <citation type="journal article" date="2002" name="Nature">
        <title>The genome sequence of Schizosaccharomyces pombe.</title>
        <authorList>
            <person name="Wood V."/>
            <person name="Gwilliam R."/>
            <person name="Rajandream M.A."/>
            <person name="Lyne M.H."/>
            <person name="Lyne R."/>
            <person name="Stewart A."/>
            <person name="Sgouros J.G."/>
            <person name="Peat N."/>
            <person name="Hayles J."/>
            <person name="Baker S.G."/>
            <person name="Basham D."/>
            <person name="Bowman S."/>
            <person name="Brooks K."/>
            <person name="Brown D."/>
            <person name="Brown S."/>
            <person name="Chillingworth T."/>
            <person name="Churcher C.M."/>
            <person name="Collins M."/>
            <person name="Connor R."/>
            <person name="Cronin A."/>
            <person name="Davis P."/>
            <person name="Feltwell T."/>
            <person name="Fraser A."/>
            <person name="Gentles S."/>
            <person name="Goble A."/>
            <person name="Hamlin N."/>
            <person name="Harris D.E."/>
            <person name="Hidalgo J."/>
            <person name="Hodgson G."/>
            <person name="Holroyd S."/>
            <person name="Hornsby T."/>
            <person name="Howarth S."/>
            <person name="Huckle E.J."/>
            <person name="Hunt S."/>
            <person name="Jagels K."/>
            <person name="James K.D."/>
            <person name="Jones L."/>
            <person name="Jones M."/>
            <person name="Leather S."/>
            <person name="McDonald S."/>
            <person name="McLean J."/>
            <person name="Mooney P."/>
            <person name="Moule S."/>
            <person name="Mungall K.L."/>
            <person name="Murphy L.D."/>
            <person name="Niblett D."/>
            <person name="Odell C."/>
            <person name="Oliver K."/>
            <person name="O'Neil S."/>
            <person name="Pearson D."/>
            <person name="Quail M.A."/>
            <person name="Rabbinowitsch E."/>
            <person name="Rutherford K.M."/>
            <person name="Rutter S."/>
            <person name="Saunders D."/>
            <person name="Seeger K."/>
            <person name="Sharp S."/>
            <person name="Skelton J."/>
            <person name="Simmonds M.N."/>
            <person name="Squares R."/>
            <person name="Squares S."/>
            <person name="Stevens K."/>
            <person name="Taylor K."/>
            <person name="Taylor R.G."/>
            <person name="Tivey A."/>
            <person name="Walsh S.V."/>
            <person name="Warren T."/>
            <person name="Whitehead S."/>
            <person name="Woodward J.R."/>
            <person name="Volckaert G."/>
            <person name="Aert R."/>
            <person name="Robben J."/>
            <person name="Grymonprez B."/>
            <person name="Weltjens I."/>
            <person name="Vanstreels E."/>
            <person name="Rieger M."/>
            <person name="Schaefer M."/>
            <person name="Mueller-Auer S."/>
            <person name="Gabel C."/>
            <person name="Fuchs M."/>
            <person name="Duesterhoeft A."/>
            <person name="Fritzc C."/>
            <person name="Holzer E."/>
            <person name="Moestl D."/>
            <person name="Hilbert H."/>
            <person name="Borzym K."/>
            <person name="Langer I."/>
            <person name="Beck A."/>
            <person name="Lehrach H."/>
            <person name="Reinhardt R."/>
            <person name="Pohl T.M."/>
            <person name="Eger P."/>
            <person name="Zimmermann W."/>
            <person name="Wedler H."/>
            <person name="Wambutt R."/>
            <person name="Purnelle B."/>
            <person name="Goffeau A."/>
            <person name="Cadieu E."/>
            <person name="Dreano S."/>
            <person name="Gloux S."/>
            <person name="Lelaure V."/>
            <person name="Mottier S."/>
            <person name="Galibert F."/>
            <person name="Aves S.J."/>
            <person name="Xiang Z."/>
            <person name="Hunt C."/>
            <person name="Moore K."/>
            <person name="Hurst S.M."/>
            <person name="Lucas M."/>
            <person name="Rochet M."/>
            <person name="Gaillardin C."/>
            <person name="Tallada V.A."/>
            <person name="Garzon A."/>
            <person name="Thode G."/>
            <person name="Daga R.R."/>
            <person name="Cruzado L."/>
            <person name="Jimenez J."/>
            <person name="Sanchez M."/>
            <person name="del Rey F."/>
            <person name="Benito J."/>
            <person name="Dominguez A."/>
            <person name="Revuelta J.L."/>
            <person name="Moreno S."/>
            <person name="Armstrong J."/>
            <person name="Forsburg S.L."/>
            <person name="Cerutti L."/>
            <person name="Lowe T."/>
            <person name="McCombie W.R."/>
            <person name="Paulsen I."/>
            <person name="Potashkin J."/>
            <person name="Shpakovski G.V."/>
            <person name="Ussery D."/>
            <person name="Barrell B.G."/>
            <person name="Nurse P."/>
        </authorList>
    </citation>
    <scope>NUCLEOTIDE SEQUENCE [LARGE SCALE GENOMIC DNA]</scope>
    <source>
        <strain>972 / ATCC 24843</strain>
    </source>
</reference>
<reference key="2">
    <citation type="journal article" date="1997" name="DNA Res.">
        <title>Identification of open reading frames in Schizosaccharomyces pombe cDNAs.</title>
        <authorList>
            <person name="Yoshioka S."/>
            <person name="Kato K."/>
            <person name="Nakai K."/>
            <person name="Okayama H."/>
            <person name="Nojima H."/>
        </authorList>
    </citation>
    <scope>NUCLEOTIDE SEQUENCE [LARGE SCALE MRNA] OF 1001-1516</scope>
    <source>
        <strain>PR745</strain>
    </source>
</reference>
<reference key="3">
    <citation type="journal article" date="2000" name="Genes Cells">
        <title>Large-scale screening of intracellular protein localization in living fission yeast cells by the use of a GFP-fusion genomic DNA library.</title>
        <authorList>
            <person name="Ding D.-Q."/>
            <person name="Tomita Y."/>
            <person name="Yamamoto A."/>
            <person name="Chikashige Y."/>
            <person name="Haraguchi T."/>
            <person name="Hiraoka Y."/>
        </authorList>
    </citation>
    <scope>NUCLEOTIDE SEQUENCE [LARGE SCALE GENOMIC DNA] OF 1280-1383</scope>
    <scope>SUBCELLULAR LOCATION</scope>
    <source>
        <strain>ATCC 38364 / 968</strain>
    </source>
</reference>
<reference key="4">
    <citation type="journal article" date="2001" name="J. Cell Sci.">
        <title>Two type V myosins with non-overlapping functions in the fission yeast Schizosaccharomyces pombe: Myo52 is concerned with growth polarity and cytokinesis, Myo51 is a component of the cytokinetic actin ring.</title>
        <authorList>
            <person name="Win T.Z."/>
            <person name="Gachet Y."/>
            <person name="Mulvihill D.P."/>
            <person name="May K.M."/>
            <person name="Hyams J.S."/>
        </authorList>
    </citation>
    <scope>FUNCTION</scope>
    <scope>SUBCELLULAR LOCATION</scope>
</reference>
<reference key="5">
    <citation type="journal article" date="2008" name="J. Proteome Res.">
        <title>Phosphoproteome analysis of fission yeast.</title>
        <authorList>
            <person name="Wilson-Grady J.T."/>
            <person name="Villen J."/>
            <person name="Gygi S.P."/>
        </authorList>
    </citation>
    <scope>PHOSPHORYLATION [LARGE SCALE ANALYSIS] AT SER-1065 AND SER-1072</scope>
    <scope>IDENTIFICATION BY MASS SPECTROMETRY</scope>
</reference>
<gene>
    <name type="primary">myo52</name>
    <name type="ORF">SPCC1919.10c</name>
</gene>
<feature type="chain" id="PRO_0000123483" description="Myosin-52">
    <location>
        <begin position="1"/>
        <end position="1516"/>
    </location>
</feature>
<feature type="domain" description="Myosin N-terminal SH3-like" evidence="5">
    <location>
        <begin position="7"/>
        <end position="62"/>
    </location>
</feature>
<feature type="domain" description="Myosin motor" evidence="4">
    <location>
        <begin position="73"/>
        <end position="766"/>
    </location>
</feature>
<feature type="domain" description="IQ 1" evidence="2">
    <location>
        <begin position="793"/>
        <end position="813"/>
    </location>
</feature>
<feature type="domain" description="IQ 2" evidence="2">
    <location>
        <begin position="818"/>
        <end position="838"/>
    </location>
</feature>
<feature type="domain" description="IQ 3" evidence="2">
    <location>
        <begin position="840"/>
        <end position="865"/>
    </location>
</feature>
<feature type="domain" description="IQ 4" evidence="2">
    <location>
        <begin position="866"/>
        <end position="886"/>
    </location>
</feature>
<feature type="domain" description="IQ 5" evidence="2">
    <location>
        <begin position="888"/>
        <end position="917"/>
    </location>
</feature>
<feature type="domain" description="Dilute" evidence="3">
    <location>
        <begin position="1163"/>
        <end position="1431"/>
    </location>
</feature>
<feature type="region of interest" description="Actin-binding" evidence="4">
    <location>
        <begin position="647"/>
        <end position="669"/>
    </location>
</feature>
<feature type="coiled-coil region" evidence="1">
    <location>
        <begin position="926"/>
        <end position="1034"/>
    </location>
</feature>
<feature type="binding site" evidence="1">
    <location>
        <begin position="167"/>
        <end position="174"/>
    </location>
    <ligand>
        <name>ATP</name>
        <dbReference type="ChEBI" id="CHEBI:30616"/>
    </ligand>
</feature>
<feature type="modified residue" description="Phosphoserine" evidence="8">
    <location>
        <position position="1065"/>
    </location>
</feature>
<feature type="modified residue" description="Phosphoserine" evidence="8">
    <location>
        <position position="1072"/>
    </location>
</feature>
<keyword id="KW-0009">Actin-binding</keyword>
<keyword id="KW-0067">ATP-binding</keyword>
<keyword id="KW-0112">Calmodulin-binding</keyword>
<keyword id="KW-0175">Coiled coil</keyword>
<keyword id="KW-0963">Cytoplasm</keyword>
<keyword id="KW-0505">Motor protein</keyword>
<keyword id="KW-0518">Myosin</keyword>
<keyword id="KW-0547">Nucleotide-binding</keyword>
<keyword id="KW-0597">Phosphoprotein</keyword>
<keyword id="KW-1185">Reference proteome</keyword>
<keyword id="KW-0677">Repeat</keyword>
<comment type="function">
    <text evidence="7">Involved in cell wall deposition where it has a role in the localization of mok1.</text>
</comment>
<comment type="subcellular location">
    <subcellularLocation>
        <location evidence="6 7">Cytoplasm</location>
    </subcellularLocation>
    <text>Localized at the cell poles and septum.</text>
</comment>
<comment type="similarity">
    <text evidence="9">Belongs to the TRAFAC class myosin-kinesin ATPase superfamily. Myosin family.</text>
</comment>
<proteinExistence type="evidence at protein level"/>
<accession>O94477</accession>
<accession>P78899</accession>
<accession>Q9US73</accession>
<evidence type="ECO:0000255" key="1"/>
<evidence type="ECO:0000255" key="2">
    <source>
        <dbReference type="PROSITE-ProRule" id="PRU00116"/>
    </source>
</evidence>
<evidence type="ECO:0000255" key="3">
    <source>
        <dbReference type="PROSITE-ProRule" id="PRU00503"/>
    </source>
</evidence>
<evidence type="ECO:0000255" key="4">
    <source>
        <dbReference type="PROSITE-ProRule" id="PRU00782"/>
    </source>
</evidence>
<evidence type="ECO:0000255" key="5">
    <source>
        <dbReference type="PROSITE-ProRule" id="PRU01190"/>
    </source>
</evidence>
<evidence type="ECO:0000269" key="6">
    <source>
    </source>
</evidence>
<evidence type="ECO:0000269" key="7">
    <source>
    </source>
</evidence>
<evidence type="ECO:0000269" key="8">
    <source>
    </source>
</evidence>
<evidence type="ECO:0000305" key="9"/>
<dbReference type="EMBL" id="CU329672">
    <property type="protein sequence ID" value="CAA22641.1"/>
    <property type="molecule type" value="Genomic_DNA"/>
</dbReference>
<dbReference type="EMBL" id="D89250">
    <property type="protein sequence ID" value="BAA13911.1"/>
    <property type="status" value="ALT_SEQ"/>
    <property type="molecule type" value="mRNA"/>
</dbReference>
<dbReference type="EMBL" id="AB028001">
    <property type="protein sequence ID" value="BAA87305.1"/>
    <property type="molecule type" value="Genomic_DNA"/>
</dbReference>
<dbReference type="PIR" id="T41235">
    <property type="entry name" value="T41235"/>
</dbReference>
<dbReference type="PIR" id="T43173">
    <property type="entry name" value="T43173"/>
</dbReference>
<dbReference type="RefSeq" id="NP_588492.1">
    <property type="nucleotide sequence ID" value="NM_001023482.2"/>
</dbReference>
<dbReference type="SMR" id="O94477"/>
<dbReference type="BioGRID" id="275427">
    <property type="interactions" value="32"/>
</dbReference>
<dbReference type="FunCoup" id="O94477">
    <property type="interactions" value="87"/>
</dbReference>
<dbReference type="STRING" id="284812.O94477"/>
<dbReference type="iPTMnet" id="O94477"/>
<dbReference type="PaxDb" id="4896-SPCC1919.10c.1"/>
<dbReference type="EnsemblFungi" id="SPCC1919.10c.1">
    <property type="protein sequence ID" value="SPCC1919.10c.1:pep"/>
    <property type="gene ID" value="SPCC1919.10c"/>
</dbReference>
<dbReference type="GeneID" id="2538846"/>
<dbReference type="KEGG" id="spo:2538846"/>
<dbReference type="PomBase" id="SPCC1919.10c">
    <property type="gene designation" value="myo52"/>
</dbReference>
<dbReference type="VEuPathDB" id="FungiDB:SPCC1919.10c"/>
<dbReference type="eggNOG" id="KOG0160">
    <property type="taxonomic scope" value="Eukaryota"/>
</dbReference>
<dbReference type="HOGENOM" id="CLU_000192_9_0_1"/>
<dbReference type="InParanoid" id="O94477"/>
<dbReference type="OMA" id="MRENINW"/>
<dbReference type="PhylomeDB" id="O94477"/>
<dbReference type="Reactome" id="R-SPO-9013419">
    <property type="pathway name" value="RHOT2 GTPase cycle"/>
</dbReference>
<dbReference type="Reactome" id="R-SPO-9013420">
    <property type="pathway name" value="RHOU GTPase cycle"/>
</dbReference>
<dbReference type="Reactome" id="R-SPO-9013425">
    <property type="pathway name" value="RHOT1 GTPase cycle"/>
</dbReference>
<dbReference type="PRO" id="PR:O94477"/>
<dbReference type="Proteomes" id="UP000002485">
    <property type="component" value="Chromosome III"/>
</dbReference>
<dbReference type="GO" id="GO:0030479">
    <property type="term" value="C:actin cortical patch"/>
    <property type="evidence" value="ECO:0000314"/>
    <property type="project" value="PomBase"/>
</dbReference>
<dbReference type="GO" id="GO:0015629">
    <property type="term" value="C:actin cytoskeleton"/>
    <property type="evidence" value="ECO:0000318"/>
    <property type="project" value="GO_Central"/>
</dbReference>
<dbReference type="GO" id="GO:0051285">
    <property type="term" value="C:cell cortex of cell tip"/>
    <property type="evidence" value="ECO:0000314"/>
    <property type="project" value="PomBase"/>
</dbReference>
<dbReference type="GO" id="GO:1902716">
    <property type="term" value="C:cell cortex of growing cell tip"/>
    <property type="evidence" value="ECO:0000314"/>
    <property type="project" value="PomBase"/>
</dbReference>
<dbReference type="GO" id="GO:0032153">
    <property type="term" value="C:cell division site"/>
    <property type="evidence" value="ECO:0000314"/>
    <property type="project" value="PomBase"/>
</dbReference>
<dbReference type="GO" id="GO:0051286">
    <property type="term" value="C:cell tip"/>
    <property type="evidence" value="ECO:0000314"/>
    <property type="project" value="PomBase"/>
</dbReference>
<dbReference type="GO" id="GO:0090726">
    <property type="term" value="C:cortical dynamic polarity patch"/>
    <property type="evidence" value="ECO:0000314"/>
    <property type="project" value="PomBase"/>
</dbReference>
<dbReference type="GO" id="GO:0005737">
    <property type="term" value="C:cytoplasm"/>
    <property type="evidence" value="ECO:0000318"/>
    <property type="project" value="GO_Central"/>
</dbReference>
<dbReference type="GO" id="GO:0097575">
    <property type="term" value="C:lateral cell cortex"/>
    <property type="evidence" value="ECO:0000314"/>
    <property type="project" value="PomBase"/>
</dbReference>
<dbReference type="GO" id="GO:1990819">
    <property type="term" value="C:mating projection actin fusion focus"/>
    <property type="evidence" value="ECO:0000314"/>
    <property type="project" value="PomBase"/>
</dbReference>
<dbReference type="GO" id="GO:0031097">
    <property type="term" value="C:medial cortex"/>
    <property type="evidence" value="ECO:0000314"/>
    <property type="project" value="PomBase"/>
</dbReference>
<dbReference type="GO" id="GO:0016020">
    <property type="term" value="C:membrane"/>
    <property type="evidence" value="ECO:0000318"/>
    <property type="project" value="GO_Central"/>
</dbReference>
<dbReference type="GO" id="GO:0016459">
    <property type="term" value="C:myosin complex"/>
    <property type="evidence" value="ECO:0007669"/>
    <property type="project" value="UniProtKB-KW"/>
</dbReference>
<dbReference type="GO" id="GO:0051015">
    <property type="term" value="F:actin filament binding"/>
    <property type="evidence" value="ECO:0000318"/>
    <property type="project" value="GO_Central"/>
</dbReference>
<dbReference type="GO" id="GO:0005524">
    <property type="term" value="F:ATP binding"/>
    <property type="evidence" value="ECO:0007669"/>
    <property type="project" value="UniProtKB-KW"/>
</dbReference>
<dbReference type="GO" id="GO:0016887">
    <property type="term" value="F:ATP hydrolysis activity"/>
    <property type="evidence" value="ECO:0000305"/>
    <property type="project" value="PomBase"/>
</dbReference>
<dbReference type="GO" id="GO:0005516">
    <property type="term" value="F:calmodulin binding"/>
    <property type="evidence" value="ECO:0007669"/>
    <property type="project" value="UniProtKB-KW"/>
</dbReference>
<dbReference type="GO" id="GO:0000146">
    <property type="term" value="F:microfilament motor activity"/>
    <property type="evidence" value="ECO:0000314"/>
    <property type="project" value="PomBase"/>
</dbReference>
<dbReference type="GO" id="GO:0061572">
    <property type="term" value="P:actin filament bundle organization"/>
    <property type="evidence" value="ECO:0000315"/>
    <property type="project" value="PomBase"/>
</dbReference>
<dbReference type="GO" id="GO:0061573">
    <property type="term" value="P:actin filament bundle retrograde transport"/>
    <property type="evidence" value="ECO:0000315"/>
    <property type="project" value="PomBase"/>
</dbReference>
<dbReference type="GO" id="GO:0007015">
    <property type="term" value="P:actin filament organization"/>
    <property type="evidence" value="ECO:0000318"/>
    <property type="project" value="GO_Central"/>
</dbReference>
<dbReference type="GO" id="GO:0070649">
    <property type="term" value="P:formin-nucleated actin cable assembly"/>
    <property type="evidence" value="ECO:0000315"/>
    <property type="project" value="PomBase"/>
</dbReference>
<dbReference type="GO" id="GO:1990896">
    <property type="term" value="P:protein localization to cell cortex of cell tip"/>
    <property type="evidence" value="ECO:0000315"/>
    <property type="project" value="PomBase"/>
</dbReference>
<dbReference type="GO" id="GO:1904601">
    <property type="term" value="P:protein transport to mating projection actin fusion focus"/>
    <property type="evidence" value="ECO:0000315"/>
    <property type="project" value="PomBase"/>
</dbReference>
<dbReference type="GO" id="GO:0097576">
    <property type="term" value="P:vacuole fusion"/>
    <property type="evidence" value="ECO:0000315"/>
    <property type="project" value="PomBase"/>
</dbReference>
<dbReference type="GO" id="GO:0030050">
    <property type="term" value="P:vesicle transport along actin filament"/>
    <property type="evidence" value="ECO:0000315"/>
    <property type="project" value="PomBase"/>
</dbReference>
<dbReference type="CDD" id="cd15474">
    <property type="entry name" value="Myo5p-like_CBD_fungal"/>
    <property type="match status" value="1"/>
</dbReference>
<dbReference type="CDD" id="cd01380">
    <property type="entry name" value="MYSc_Myo5"/>
    <property type="match status" value="1"/>
</dbReference>
<dbReference type="FunFam" id="1.10.10.820:FF:000001">
    <property type="entry name" value="Myosin heavy chain"/>
    <property type="match status" value="1"/>
</dbReference>
<dbReference type="FunFam" id="1.20.5.190:FF:000001">
    <property type="entry name" value="unconventional myosin-Va"/>
    <property type="match status" value="1"/>
</dbReference>
<dbReference type="Gene3D" id="1.10.10.820">
    <property type="match status" value="1"/>
</dbReference>
<dbReference type="Gene3D" id="1.20.5.190">
    <property type="match status" value="2"/>
</dbReference>
<dbReference type="Gene3D" id="1.20.5.4820">
    <property type="match status" value="1"/>
</dbReference>
<dbReference type="Gene3D" id="1.20.58.530">
    <property type="match status" value="1"/>
</dbReference>
<dbReference type="Gene3D" id="3.40.850.10">
    <property type="entry name" value="Kinesin motor domain"/>
    <property type="match status" value="1"/>
</dbReference>
<dbReference type="Gene3D" id="1.20.120.720">
    <property type="entry name" value="Myosin VI head, motor domain, U50 subdomain"/>
    <property type="match status" value="1"/>
</dbReference>
<dbReference type="InterPro" id="IPR002710">
    <property type="entry name" value="Dilute_dom"/>
</dbReference>
<dbReference type="InterPro" id="IPR000048">
    <property type="entry name" value="IQ_motif_EF-hand-BS"/>
</dbReference>
<dbReference type="InterPro" id="IPR036961">
    <property type="entry name" value="Kinesin_motor_dom_sf"/>
</dbReference>
<dbReference type="InterPro" id="IPR001609">
    <property type="entry name" value="Myosin_head_motor_dom-like"/>
</dbReference>
<dbReference type="InterPro" id="IPR004009">
    <property type="entry name" value="Myosin_N"/>
</dbReference>
<dbReference type="InterPro" id="IPR036103">
    <property type="entry name" value="MYSc_Myo5"/>
</dbReference>
<dbReference type="InterPro" id="IPR027417">
    <property type="entry name" value="P-loop_NTPase"/>
</dbReference>
<dbReference type="PANTHER" id="PTHR13140">
    <property type="entry name" value="MYOSIN"/>
    <property type="match status" value="1"/>
</dbReference>
<dbReference type="PANTHER" id="PTHR13140:SF841">
    <property type="entry name" value="MYOSIN-52"/>
    <property type="match status" value="1"/>
</dbReference>
<dbReference type="Pfam" id="PF01843">
    <property type="entry name" value="DIL"/>
    <property type="match status" value="1"/>
</dbReference>
<dbReference type="Pfam" id="PF00612">
    <property type="entry name" value="IQ"/>
    <property type="match status" value="4"/>
</dbReference>
<dbReference type="Pfam" id="PF00063">
    <property type="entry name" value="Myosin_head"/>
    <property type="match status" value="1"/>
</dbReference>
<dbReference type="PRINTS" id="PR00193">
    <property type="entry name" value="MYOSINHEAVY"/>
</dbReference>
<dbReference type="SMART" id="SM01132">
    <property type="entry name" value="DIL"/>
    <property type="match status" value="1"/>
</dbReference>
<dbReference type="SMART" id="SM00015">
    <property type="entry name" value="IQ"/>
    <property type="match status" value="5"/>
</dbReference>
<dbReference type="SMART" id="SM00242">
    <property type="entry name" value="MYSc"/>
    <property type="match status" value="1"/>
</dbReference>
<dbReference type="SUPFAM" id="SSF52540">
    <property type="entry name" value="P-loop containing nucleoside triphosphate hydrolases"/>
    <property type="match status" value="2"/>
</dbReference>
<dbReference type="PROSITE" id="PS51126">
    <property type="entry name" value="DILUTE"/>
    <property type="match status" value="1"/>
</dbReference>
<dbReference type="PROSITE" id="PS50096">
    <property type="entry name" value="IQ"/>
    <property type="match status" value="2"/>
</dbReference>
<dbReference type="PROSITE" id="PS51456">
    <property type="entry name" value="MYOSIN_MOTOR"/>
    <property type="match status" value="1"/>
</dbReference>
<dbReference type="PROSITE" id="PS51844">
    <property type="entry name" value="SH3_LIKE"/>
    <property type="match status" value="1"/>
</dbReference>
<organism>
    <name type="scientific">Schizosaccharomyces pombe (strain 972 / ATCC 24843)</name>
    <name type="common">Fission yeast</name>
    <dbReference type="NCBI Taxonomy" id="284812"/>
    <lineage>
        <taxon>Eukaryota</taxon>
        <taxon>Fungi</taxon>
        <taxon>Dikarya</taxon>
        <taxon>Ascomycota</taxon>
        <taxon>Taphrinomycotina</taxon>
        <taxon>Schizosaccharomycetes</taxon>
        <taxon>Schizosaccharomycetales</taxon>
        <taxon>Schizosaccharomycetaceae</taxon>
        <taxon>Schizosaccharomyces</taxon>
    </lineage>
</organism>
<protein>
    <recommendedName>
        <fullName>Myosin-52</fullName>
    </recommendedName>
    <alternativeName>
        <fullName>Myosin type V-2</fullName>
    </alternativeName>
</protein>
<name>MYO52_SCHPO</name>
<sequence length="1516" mass="175155">MTSGIYYKGLQCWIPDEQSQWIPGSIKDCRVEGEKAFLTVQDENENETVITVKPDDLNYEGRNGLPFLRSINSDADDLTDLSYLNEPSVLDALSTRYNQLQIYTYSGIVLIAVNPFQRLPNLYTHEIVRAYSEKSRDELDPHLYAIAEDSYKCMNQEHKNQTIIISGESGAGKTVSARYIMRYFASVQALIQSTDSNFHEAPQLTAVENEILATNPIMEAFGNSKTSRNDNSSRFGKYIQILFDGNATIIGAKIQTYLLERSRLVFQPNQERNYHIFYQILAGSSSEQLEKWKLVENSQEFNYLKQGNCSTIEGVNDKEEFKATVDALKTVGIDNDTCECIFSLLAALLHIGNIEVKHSRNDAYIDSKNENLINATSLLGVDPSSLVKWLTKRKIKMASEGILKPLNEFQAVVARDSVAKFLYASLFDWLVATINKALMYSADKSNQTAKSFIGVLDIYGFEHFKKNSFEQFCINYANEKLQQEFYRHVFKLEQEEYAAEGLNWSYIDYQDNQQCISMIESRLGILSLLDEECRMPTNSDENWVSKLNDAFSKPEFKNSYQKSRFGNKEFTIKHYALDVVYCAEGFIDKNRDTISDELLELFTNSDVPFVKDLVLFRLEQTAPPADTKKIKTKPKSNTLGSMFKSSLVSLMSTINETNAHYIRCIKPNEEKEAWKFDNQMVVSQLRACGVLETIKISCAGFPSRWTFDEFVSRYYMLVPSAVRTTESLTFSKAILEKHADPTKYQIGKTKIFFRSGVTPLLESARDKALKHAAHLLYEAFAVNYYRTRFLLSRKRVRSFQAVAHGFLSRRHTEYELLSSNIIKLQSLWRTALKRKEFIQTKNSILKVQSIIRGFLLRQTLEEKTKHDATLIIQSLWLTFKAHKHYKELQYYAVRIQSLWRMKLAKRQLTELKIESTKASHLKQVSYRLESRLFEISKQLDNSEQENNKFRERIAELESHLSNYAEAKLAQERELEQTRVLISDQSQDGELKELLEEKENALIMMEEEMRQVNDANTELLRVNATLKSQLKNYDMIIVEQTSQLKEKNRIIASLTKATKILNSASSIEQSRNSEEKSRRDSSLMEMRTQKEMLVLLMNDGLKHDLDKLTEYAGRTFTTLKTLLLKDNDVEAQKLDHLFLAKLLFIIISQMWKSNLCQESVALVERYCVHTLEYVFQKTSSANERPDIGFWVANTHALLAFVYTKQQAFKHSSAFTLLSTESHESVQTIFEMIESHLSKIFFEWVRQVNNFLKPLIVQAMIITGTNTDAGDENRKLRIKFFEKPKYKITDVIHVLNKVHDSCQAYKVNYEIYNALIRSIYRFINVEAFNSLFIDERGSWKRGTNISYNYHVLKDWCLESGVPEAYLQLEELLQTSKILQFVKDDPNYVARVRDFYALNFLQIKTLLHRYDYADYEAHVPKKTMSELSKNIVAEGINQREQLTYEVLDYRLQDSFEESPSLEKIKIPDDCNVTYLRRIIDLASAEESVEQALITVGNVADNDVQNSSDEENQVPNGIKV</sequence>